<keyword id="KW-0010">Activator</keyword>
<keyword id="KW-0238">DNA-binding</keyword>
<keyword id="KW-0936">Ethylene signaling pathway</keyword>
<keyword id="KW-0539">Nucleus</keyword>
<keyword id="KW-1185">Reference proteome</keyword>
<keyword id="KW-0804">Transcription</keyword>
<keyword id="KW-0805">Transcription regulation</keyword>
<feature type="chain" id="PRO_0000290370" description="Ethylene-responsive transcription factor SHINE 2">
    <location>
        <begin position="1"/>
        <end position="189"/>
    </location>
</feature>
<feature type="DNA-binding region" description="AP2/ERF" evidence="2">
    <location>
        <begin position="6"/>
        <end position="63"/>
    </location>
</feature>
<evidence type="ECO:0000250" key="1"/>
<evidence type="ECO:0000255" key="2">
    <source>
        <dbReference type="PROSITE-ProRule" id="PRU00366"/>
    </source>
</evidence>
<evidence type="ECO:0000269" key="3">
    <source>
    </source>
</evidence>
<evidence type="ECO:0000305" key="4"/>
<proteinExistence type="evidence at transcript level"/>
<protein>
    <recommendedName>
        <fullName>Ethylene-responsive transcription factor SHINE 2</fullName>
    </recommendedName>
</protein>
<organism>
    <name type="scientific">Arabidopsis thaliana</name>
    <name type="common">Mouse-ear cress</name>
    <dbReference type="NCBI Taxonomy" id="3702"/>
    <lineage>
        <taxon>Eukaryota</taxon>
        <taxon>Viridiplantae</taxon>
        <taxon>Streptophyta</taxon>
        <taxon>Embryophyta</taxon>
        <taxon>Tracheophyta</taxon>
        <taxon>Spermatophyta</taxon>
        <taxon>Magnoliopsida</taxon>
        <taxon>eudicotyledons</taxon>
        <taxon>Gunneridae</taxon>
        <taxon>Pentapetalae</taxon>
        <taxon>rosids</taxon>
        <taxon>malvids</taxon>
        <taxon>Brassicales</taxon>
        <taxon>Brassicaceae</taxon>
        <taxon>Camelineae</taxon>
        <taxon>Arabidopsis</taxon>
    </lineage>
</organism>
<sequence>MVHSRKFRGVRQRQWGSWVSEIRHPLLKRRVWLGTFETAEAAARAYDQAALLMNGQNAKTNFPVVKSEEGSDHVKDVNSPLMSPKSLSELLNAKLRKSCKDLTPSLTCLRLDTDSSHIGVWQKRAGSKTSPTWVMRLELGNVVNESAVDLGLTTMNKQNVEKEEEEEEAIISDEDQLAMEMIEELLNWS</sequence>
<reference key="1">
    <citation type="submission" date="2004-02" db="EMBL/GenBank/DDBJ databases">
        <title>Molecular cloning, expression, phylogenetic and functional characterization of the Arabidopsis AP2/EREBP transcription factor family.</title>
        <authorList>
            <person name="Pan Y."/>
            <person name="Gong W."/>
            <person name="Liu D."/>
            <person name="Fu Q."/>
            <person name="Mei W.-Q."/>
            <person name="Song W.-Q."/>
            <person name="Ma L.-G."/>
            <person name="Luo J.-C."/>
            <person name="Deng X.-W."/>
            <person name="Zhu Y.-X."/>
        </authorList>
    </citation>
    <scope>NUCLEOTIDE SEQUENCE [MRNA]</scope>
</reference>
<reference key="2">
    <citation type="journal article" date="2000" name="Nature">
        <title>Sequence and analysis of chromosome 5 of the plant Arabidopsis thaliana.</title>
        <authorList>
            <person name="Tabata S."/>
            <person name="Kaneko T."/>
            <person name="Nakamura Y."/>
            <person name="Kotani H."/>
            <person name="Kato T."/>
            <person name="Asamizu E."/>
            <person name="Miyajima N."/>
            <person name="Sasamoto S."/>
            <person name="Kimura T."/>
            <person name="Hosouchi T."/>
            <person name="Kawashima K."/>
            <person name="Kohara M."/>
            <person name="Matsumoto M."/>
            <person name="Matsuno A."/>
            <person name="Muraki A."/>
            <person name="Nakayama S."/>
            <person name="Nakazaki N."/>
            <person name="Naruo K."/>
            <person name="Okumura S."/>
            <person name="Shinpo S."/>
            <person name="Takeuchi C."/>
            <person name="Wada T."/>
            <person name="Watanabe A."/>
            <person name="Yamada M."/>
            <person name="Yasuda M."/>
            <person name="Sato S."/>
            <person name="de la Bastide M."/>
            <person name="Huang E."/>
            <person name="Spiegel L."/>
            <person name="Gnoj L."/>
            <person name="O'Shaughnessy A."/>
            <person name="Preston R."/>
            <person name="Habermann K."/>
            <person name="Murray J."/>
            <person name="Johnson D."/>
            <person name="Rohlfing T."/>
            <person name="Nelson J."/>
            <person name="Stoneking T."/>
            <person name="Pepin K."/>
            <person name="Spieth J."/>
            <person name="Sekhon M."/>
            <person name="Armstrong J."/>
            <person name="Becker M."/>
            <person name="Belter E."/>
            <person name="Cordum H."/>
            <person name="Cordes M."/>
            <person name="Courtney L."/>
            <person name="Courtney W."/>
            <person name="Dante M."/>
            <person name="Du H."/>
            <person name="Edwards J."/>
            <person name="Fryman J."/>
            <person name="Haakensen B."/>
            <person name="Lamar E."/>
            <person name="Latreille P."/>
            <person name="Leonard S."/>
            <person name="Meyer R."/>
            <person name="Mulvaney E."/>
            <person name="Ozersky P."/>
            <person name="Riley A."/>
            <person name="Strowmatt C."/>
            <person name="Wagner-McPherson C."/>
            <person name="Wollam A."/>
            <person name="Yoakum M."/>
            <person name="Bell M."/>
            <person name="Dedhia N."/>
            <person name="Parnell L."/>
            <person name="Shah R."/>
            <person name="Rodriguez M."/>
            <person name="Hoon See L."/>
            <person name="Vil D."/>
            <person name="Baker J."/>
            <person name="Kirchoff K."/>
            <person name="Toth K."/>
            <person name="King L."/>
            <person name="Bahret A."/>
            <person name="Miller B."/>
            <person name="Marra M.A."/>
            <person name="Martienssen R."/>
            <person name="McCombie W.R."/>
            <person name="Wilson R.K."/>
            <person name="Murphy G."/>
            <person name="Bancroft I."/>
            <person name="Volckaert G."/>
            <person name="Wambutt R."/>
            <person name="Duesterhoeft A."/>
            <person name="Stiekema W."/>
            <person name="Pohl T."/>
            <person name="Entian K.-D."/>
            <person name="Terryn N."/>
            <person name="Hartley N."/>
            <person name="Bent E."/>
            <person name="Johnson S."/>
            <person name="Langham S.-A."/>
            <person name="McCullagh B."/>
            <person name="Robben J."/>
            <person name="Grymonprez B."/>
            <person name="Zimmermann W."/>
            <person name="Ramsperger U."/>
            <person name="Wedler H."/>
            <person name="Balke K."/>
            <person name="Wedler E."/>
            <person name="Peters S."/>
            <person name="van Staveren M."/>
            <person name="Dirkse W."/>
            <person name="Mooijman P."/>
            <person name="Klein Lankhorst R."/>
            <person name="Weitzenegger T."/>
            <person name="Bothe G."/>
            <person name="Rose M."/>
            <person name="Hauf J."/>
            <person name="Berneiser S."/>
            <person name="Hempel S."/>
            <person name="Feldpausch M."/>
            <person name="Lamberth S."/>
            <person name="Villarroel R."/>
            <person name="Gielen J."/>
            <person name="Ardiles W."/>
            <person name="Bents O."/>
            <person name="Lemcke K."/>
            <person name="Kolesov G."/>
            <person name="Mayer K.F.X."/>
            <person name="Rudd S."/>
            <person name="Schoof H."/>
            <person name="Schueller C."/>
            <person name="Zaccaria P."/>
            <person name="Mewes H.-W."/>
            <person name="Bevan M."/>
            <person name="Fransz P.F."/>
        </authorList>
    </citation>
    <scope>NUCLEOTIDE SEQUENCE [LARGE SCALE GENOMIC DNA]</scope>
    <source>
        <strain>cv. Columbia</strain>
    </source>
</reference>
<reference key="3">
    <citation type="journal article" date="2017" name="Plant J.">
        <title>Araport11: a complete reannotation of the Arabidopsis thaliana reference genome.</title>
        <authorList>
            <person name="Cheng C.Y."/>
            <person name="Krishnakumar V."/>
            <person name="Chan A.P."/>
            <person name="Thibaud-Nissen F."/>
            <person name="Schobel S."/>
            <person name="Town C.D."/>
        </authorList>
    </citation>
    <scope>GENOME REANNOTATION</scope>
    <source>
        <strain>cv. Columbia</strain>
    </source>
</reference>
<reference key="4">
    <citation type="journal article" date="2004" name="Plant Cell">
        <title>The SHINE clade of AP2 domain transcription factors activates wax biosynthesis, alters cuticle properties, and confers drought tolerance when overexpressed in Arabidopsis.</title>
        <authorList>
            <person name="Aharoni A."/>
            <person name="Dixit S."/>
            <person name="Jetter R."/>
            <person name="Thoenes E."/>
            <person name="van Arkel G."/>
            <person name="Pereira A."/>
        </authorList>
    </citation>
    <scope>FUNCTION</scope>
    <scope>TISSUE SPECIFICITY</scope>
    <scope>DEVELOPMENTAL STAGE</scope>
</reference>
<reference key="5">
    <citation type="journal article" date="2006" name="Plant Physiol.">
        <title>Genome-wide analysis of the ERF gene family in Arabidopsis and rice.</title>
        <authorList>
            <person name="Nakano T."/>
            <person name="Suzuki K."/>
            <person name="Fujimura T."/>
            <person name="Shinshi H."/>
        </authorList>
    </citation>
    <scope>GENE FAMILY</scope>
    <scope>NOMENCLATURE</scope>
</reference>
<dbReference type="EMBL" id="AY560865">
    <property type="protein sequence ID" value="AAT44932.1"/>
    <property type="molecule type" value="mRNA"/>
</dbReference>
<dbReference type="EMBL" id="AL360314">
    <property type="protein sequence ID" value="CAB96654.1"/>
    <property type="molecule type" value="Genomic_DNA"/>
</dbReference>
<dbReference type="EMBL" id="CP002688">
    <property type="protein sequence ID" value="AED91644.1"/>
    <property type="molecule type" value="Genomic_DNA"/>
</dbReference>
<dbReference type="RefSeq" id="NP_196680.1">
    <property type="nucleotide sequence ID" value="NM_121157.2"/>
</dbReference>
<dbReference type="SMR" id="Q9LFN7"/>
<dbReference type="BioGRID" id="16267">
    <property type="interactions" value="2"/>
</dbReference>
<dbReference type="FunCoup" id="Q9LFN7">
    <property type="interactions" value="18"/>
</dbReference>
<dbReference type="STRING" id="3702.Q9LFN7"/>
<dbReference type="PaxDb" id="3702-AT5G11190.1"/>
<dbReference type="EnsemblPlants" id="AT5G11190.1">
    <property type="protein sequence ID" value="AT5G11190.1"/>
    <property type="gene ID" value="AT5G11190"/>
</dbReference>
<dbReference type="GeneID" id="830989"/>
<dbReference type="Gramene" id="AT5G11190.1">
    <property type="protein sequence ID" value="AT5G11190.1"/>
    <property type="gene ID" value="AT5G11190"/>
</dbReference>
<dbReference type="KEGG" id="ath:AT5G11190"/>
<dbReference type="Araport" id="AT5G11190"/>
<dbReference type="TAIR" id="AT5G11190">
    <property type="gene designation" value="SHN2"/>
</dbReference>
<dbReference type="eggNOG" id="ENOG502RXNN">
    <property type="taxonomic scope" value="Eukaryota"/>
</dbReference>
<dbReference type="HOGENOM" id="CLU_042594_3_0_1"/>
<dbReference type="InParanoid" id="Q9LFN7"/>
<dbReference type="OMA" id="VHDANSP"/>
<dbReference type="PhylomeDB" id="Q9LFN7"/>
<dbReference type="PRO" id="PR:Q9LFN7"/>
<dbReference type="Proteomes" id="UP000006548">
    <property type="component" value="Chromosome 5"/>
</dbReference>
<dbReference type="ExpressionAtlas" id="Q9LFN7">
    <property type="expression patterns" value="baseline and differential"/>
</dbReference>
<dbReference type="GO" id="GO:0005634">
    <property type="term" value="C:nucleus"/>
    <property type="evidence" value="ECO:0007669"/>
    <property type="project" value="UniProtKB-SubCell"/>
</dbReference>
<dbReference type="GO" id="GO:0003677">
    <property type="term" value="F:DNA binding"/>
    <property type="evidence" value="ECO:0007669"/>
    <property type="project" value="UniProtKB-KW"/>
</dbReference>
<dbReference type="GO" id="GO:0003700">
    <property type="term" value="F:DNA-binding transcription factor activity"/>
    <property type="evidence" value="ECO:0000314"/>
    <property type="project" value="TAIR"/>
</dbReference>
<dbReference type="GO" id="GO:0009873">
    <property type="term" value="P:ethylene-activated signaling pathway"/>
    <property type="evidence" value="ECO:0007669"/>
    <property type="project" value="UniProtKB-KW"/>
</dbReference>
<dbReference type="CDD" id="cd00018">
    <property type="entry name" value="AP2"/>
    <property type="match status" value="1"/>
</dbReference>
<dbReference type="FunFam" id="3.30.730.10:FF:000001">
    <property type="entry name" value="Ethylene-responsive transcription factor 2"/>
    <property type="match status" value="1"/>
</dbReference>
<dbReference type="Gene3D" id="3.30.730.10">
    <property type="entry name" value="AP2/ERF domain"/>
    <property type="match status" value="1"/>
</dbReference>
<dbReference type="InterPro" id="IPR001471">
    <property type="entry name" value="AP2/ERF_dom"/>
</dbReference>
<dbReference type="InterPro" id="IPR036955">
    <property type="entry name" value="AP2/ERF_dom_sf"/>
</dbReference>
<dbReference type="InterPro" id="IPR050913">
    <property type="entry name" value="AP2/ERF_ERF_subfamily"/>
</dbReference>
<dbReference type="InterPro" id="IPR016177">
    <property type="entry name" value="DNA-bd_dom_sf"/>
</dbReference>
<dbReference type="PANTHER" id="PTHR31194:SF12">
    <property type="entry name" value="ETHYLENE-RESPONSIVE TRANSCRIPTION FACTOR SHINE 2"/>
    <property type="match status" value="1"/>
</dbReference>
<dbReference type="PANTHER" id="PTHR31194">
    <property type="entry name" value="SHN SHINE , DNA BINDING / TRANSCRIPTION FACTOR"/>
    <property type="match status" value="1"/>
</dbReference>
<dbReference type="Pfam" id="PF00847">
    <property type="entry name" value="AP2"/>
    <property type="match status" value="1"/>
</dbReference>
<dbReference type="PRINTS" id="PR00367">
    <property type="entry name" value="ETHRSPELEMNT"/>
</dbReference>
<dbReference type="SMART" id="SM00380">
    <property type="entry name" value="AP2"/>
    <property type="match status" value="1"/>
</dbReference>
<dbReference type="SUPFAM" id="SSF54171">
    <property type="entry name" value="DNA-binding domain"/>
    <property type="match status" value="1"/>
</dbReference>
<dbReference type="PROSITE" id="PS51032">
    <property type="entry name" value="AP2_ERF"/>
    <property type="match status" value="1"/>
</dbReference>
<comment type="function">
    <text evidence="1 3">Promotes cuticle formation by inducing the expression of enzymes involved in wax biosynthesis. Probably acts as a transcriptional activator. Binds to the GCC-box pathogenesis-related promoter element. May be involved in the regulation of gene expression by stress factors and by components of stress signal transduction pathways (By similarity).</text>
</comment>
<comment type="subcellular location">
    <subcellularLocation>
        <location evidence="4">Nucleus</location>
    </subcellularLocation>
</comment>
<comment type="tissue specificity">
    <text evidence="3">In flowers.</text>
</comment>
<comment type="developmental stage">
    <text evidence="3">The SHN2 gene shows a pattern of expression associated with anther and silique dehiscence. Expressed in the stomium region when tapetum degeneration is initiated in the anther. Up to anthesis and until stamens fell off the senescing flower, restricted to the anther dehiscence zone. Subsequently, when petals and sepals withered, found at the bottom of each valve. During silique development, strongly expressed along the valve margin-replum boundary.</text>
</comment>
<comment type="similarity">
    <text evidence="4">Belongs to the AP2/ERF transcription factor family. ERF subfamily.</text>
</comment>
<gene>
    <name type="primary">SHN2</name>
    <name type="synonym">ERF004</name>
    <name type="ordered locus">At5g11190</name>
    <name type="ORF">F2I11.80</name>
</gene>
<name>SHN2_ARATH</name>
<accession>Q9LFN7</accession>